<accession>P77245</accession>
<dbReference type="EMBL" id="U00096">
    <property type="protein sequence ID" value="AAC75480.1"/>
    <property type="molecule type" value="Genomic_DNA"/>
</dbReference>
<dbReference type="EMBL" id="AP009048">
    <property type="protein sequence ID" value="BAA16310.1"/>
    <property type="molecule type" value="Genomic_DNA"/>
</dbReference>
<dbReference type="PIR" id="B65017">
    <property type="entry name" value="B65017"/>
</dbReference>
<dbReference type="RefSeq" id="NP_416922.1">
    <property type="nucleotide sequence ID" value="NC_000913.3"/>
</dbReference>
<dbReference type="RefSeq" id="WP_000966470.1">
    <property type="nucleotide sequence ID" value="NZ_LN832404.1"/>
</dbReference>
<dbReference type="PDB" id="7EN5">
    <property type="method" value="X-ray"/>
    <property type="resolution" value="1.25 A"/>
    <property type="chains" value="A=91-285"/>
</dbReference>
<dbReference type="PDB" id="7EN6">
    <property type="method" value="X-ray"/>
    <property type="resolution" value="2.28 A"/>
    <property type="chains" value="A/B/C/D=91-271"/>
</dbReference>
<dbReference type="PDB" id="7EN7">
    <property type="method" value="X-ray"/>
    <property type="resolution" value="1.22 A"/>
    <property type="chains" value="A=91-285"/>
</dbReference>
<dbReference type="PDBsum" id="7EN5"/>
<dbReference type="PDBsum" id="7EN6"/>
<dbReference type="PDBsum" id="7EN7"/>
<dbReference type="SMR" id="P77245"/>
<dbReference type="BioGRID" id="4263047">
    <property type="interactions" value="114"/>
</dbReference>
<dbReference type="DIP" id="DIP-12018N"/>
<dbReference type="FunCoup" id="P77245">
    <property type="interactions" value="194"/>
</dbReference>
<dbReference type="IntAct" id="P77245">
    <property type="interactions" value="12"/>
</dbReference>
<dbReference type="STRING" id="511145.b2427"/>
<dbReference type="PaxDb" id="511145-b2427"/>
<dbReference type="EnsemblBacteria" id="AAC75480">
    <property type="protein sequence ID" value="AAC75480"/>
    <property type="gene ID" value="b2427"/>
</dbReference>
<dbReference type="GeneID" id="946568"/>
<dbReference type="KEGG" id="ecj:JW2420"/>
<dbReference type="KEGG" id="eco:b2427"/>
<dbReference type="KEGG" id="ecoc:C3026_13485"/>
<dbReference type="PATRIC" id="fig|1411691.4.peg.4304"/>
<dbReference type="EchoBASE" id="EB3913"/>
<dbReference type="eggNOG" id="COG1737">
    <property type="taxonomic scope" value="Bacteria"/>
</dbReference>
<dbReference type="HOGENOM" id="CLU_055769_0_2_6"/>
<dbReference type="InParanoid" id="P77245"/>
<dbReference type="OMA" id="DSHIQMA"/>
<dbReference type="OrthoDB" id="370421at2"/>
<dbReference type="PhylomeDB" id="P77245"/>
<dbReference type="BioCyc" id="EcoCyc:G7262-MONOMER"/>
<dbReference type="UniPathway" id="UPA00342"/>
<dbReference type="PRO" id="PR:P77245"/>
<dbReference type="Proteomes" id="UP000000625">
    <property type="component" value="Chromosome"/>
</dbReference>
<dbReference type="GO" id="GO:0097367">
    <property type="term" value="F:carbohydrate derivative binding"/>
    <property type="evidence" value="ECO:0007669"/>
    <property type="project" value="InterPro"/>
</dbReference>
<dbReference type="GO" id="GO:0003677">
    <property type="term" value="F:DNA binding"/>
    <property type="evidence" value="ECO:0007669"/>
    <property type="project" value="UniProtKB-KW"/>
</dbReference>
<dbReference type="GO" id="GO:0003700">
    <property type="term" value="F:DNA-binding transcription factor activity"/>
    <property type="evidence" value="ECO:0000314"/>
    <property type="project" value="EcoCyc"/>
</dbReference>
<dbReference type="GO" id="GO:1901135">
    <property type="term" value="P:carbohydrate derivative metabolic process"/>
    <property type="evidence" value="ECO:0007669"/>
    <property type="project" value="InterPro"/>
</dbReference>
<dbReference type="GO" id="GO:0097173">
    <property type="term" value="P:N-acetylmuramic acid catabolic process"/>
    <property type="evidence" value="ECO:0007669"/>
    <property type="project" value="UniProtKB-UniPathway"/>
</dbReference>
<dbReference type="GO" id="GO:0045892">
    <property type="term" value="P:negative regulation of DNA-templated transcription"/>
    <property type="evidence" value="ECO:0000314"/>
    <property type="project" value="EcoCyc"/>
</dbReference>
<dbReference type="GO" id="GO:0043470">
    <property type="term" value="P:regulation of carbohydrate catabolic process"/>
    <property type="evidence" value="ECO:0007669"/>
    <property type="project" value="UniProtKB-UniRule"/>
</dbReference>
<dbReference type="GO" id="GO:0006355">
    <property type="term" value="P:regulation of DNA-templated transcription"/>
    <property type="evidence" value="ECO:0000318"/>
    <property type="project" value="GO_Central"/>
</dbReference>
<dbReference type="CDD" id="cd05013">
    <property type="entry name" value="SIS_RpiR"/>
    <property type="match status" value="1"/>
</dbReference>
<dbReference type="FunFam" id="3.40.50.10490:FF:000028">
    <property type="entry name" value="HTH-type transcriptional regulator MurR"/>
    <property type="match status" value="1"/>
</dbReference>
<dbReference type="Gene3D" id="3.40.50.10490">
    <property type="entry name" value="Glucose-6-phosphate isomerase like protein, domain 1"/>
    <property type="match status" value="1"/>
</dbReference>
<dbReference type="Gene3D" id="1.10.10.10">
    <property type="entry name" value="Winged helix-like DNA-binding domain superfamily/Winged helix DNA-binding domain"/>
    <property type="match status" value="1"/>
</dbReference>
<dbReference type="HAMAP" id="MF_02108">
    <property type="entry name" value="HTH_type_MurR"/>
    <property type="match status" value="1"/>
</dbReference>
<dbReference type="InterPro" id="IPR009057">
    <property type="entry name" value="Homeodomain-like_sf"/>
</dbReference>
<dbReference type="InterPro" id="IPR000281">
    <property type="entry name" value="HTH_RpiR"/>
</dbReference>
<dbReference type="InterPro" id="IPR047640">
    <property type="entry name" value="RpiR-like"/>
</dbReference>
<dbReference type="InterPro" id="IPR035472">
    <property type="entry name" value="RpiR-like_SIS"/>
</dbReference>
<dbReference type="InterPro" id="IPR001347">
    <property type="entry name" value="SIS_dom"/>
</dbReference>
<dbReference type="InterPro" id="IPR046348">
    <property type="entry name" value="SIS_dom_sf"/>
</dbReference>
<dbReference type="InterPro" id="IPR022821">
    <property type="entry name" value="Tscrpt_reg_HTH_MurR"/>
</dbReference>
<dbReference type="InterPro" id="IPR036388">
    <property type="entry name" value="WH-like_DNA-bd_sf"/>
</dbReference>
<dbReference type="NCBIfam" id="NF012026">
    <property type="entry name" value="PRK15482.1"/>
    <property type="match status" value="1"/>
</dbReference>
<dbReference type="PANTHER" id="PTHR30514">
    <property type="entry name" value="GLUCOKINASE"/>
    <property type="match status" value="1"/>
</dbReference>
<dbReference type="PANTHER" id="PTHR30514:SF17">
    <property type="entry name" value="HTH-TYPE TRANSCRIPTIONAL REGULATOR MURR"/>
    <property type="match status" value="1"/>
</dbReference>
<dbReference type="Pfam" id="PF01418">
    <property type="entry name" value="HTH_6"/>
    <property type="match status" value="1"/>
</dbReference>
<dbReference type="Pfam" id="PF01380">
    <property type="entry name" value="SIS"/>
    <property type="match status" value="1"/>
</dbReference>
<dbReference type="SUPFAM" id="SSF46689">
    <property type="entry name" value="Homeodomain-like"/>
    <property type="match status" value="1"/>
</dbReference>
<dbReference type="SUPFAM" id="SSF53697">
    <property type="entry name" value="SIS domain"/>
    <property type="match status" value="1"/>
</dbReference>
<dbReference type="PROSITE" id="PS51071">
    <property type="entry name" value="HTH_RPIR"/>
    <property type="match status" value="1"/>
</dbReference>
<dbReference type="PROSITE" id="PS51464">
    <property type="entry name" value="SIS"/>
    <property type="match status" value="1"/>
</dbReference>
<name>MURR_ECOLI</name>
<sequence>MLYLTKISNAGSEFTENEQKIADFLQANVSELQSVSSRQMAKQLGISQSSIVKFAQKLGAQGFTELRMALIGEYSASREKTNATALHLHSSITSDDSLEVIARKLNREKELALEQTCALLDYARLQKIIEVISKAPFIQITGLGGSALVGRDLSFKLMKIGYRVACEADTHVQATVSQALKKGDVQIAISYSGSKKEIVLCAEAARKQGATVIAITSLTDSPLRRLAHFTLDTVSGETEWRSSSMSTRTAQNSVTDLLFVGLVQLNDVESLKMIQRSSELTQRLK</sequence>
<gene>
    <name type="primary">murR</name>
    <name type="synonym">yfeT</name>
    <name type="ordered locus">b2427</name>
    <name type="ordered locus">JW2420</name>
</gene>
<organism>
    <name type="scientific">Escherichia coli (strain K12)</name>
    <dbReference type="NCBI Taxonomy" id="83333"/>
    <lineage>
        <taxon>Bacteria</taxon>
        <taxon>Pseudomonadati</taxon>
        <taxon>Pseudomonadota</taxon>
        <taxon>Gammaproteobacteria</taxon>
        <taxon>Enterobacterales</taxon>
        <taxon>Enterobacteriaceae</taxon>
        <taxon>Escherichia</taxon>
    </lineage>
</organism>
<proteinExistence type="evidence at protein level"/>
<reference key="1">
    <citation type="journal article" date="1997" name="DNA Res.">
        <title>Construction of a contiguous 874-kb sequence of the Escherichia coli-K12 genome corresponding to 50.0-68.8 min on the linkage map and analysis of its sequence features.</title>
        <authorList>
            <person name="Yamamoto Y."/>
            <person name="Aiba H."/>
            <person name="Baba T."/>
            <person name="Hayashi K."/>
            <person name="Inada T."/>
            <person name="Isono K."/>
            <person name="Itoh T."/>
            <person name="Kimura S."/>
            <person name="Kitagawa M."/>
            <person name="Makino K."/>
            <person name="Miki T."/>
            <person name="Mitsuhashi N."/>
            <person name="Mizobuchi K."/>
            <person name="Mori H."/>
            <person name="Nakade S."/>
            <person name="Nakamura Y."/>
            <person name="Nashimoto H."/>
            <person name="Oshima T."/>
            <person name="Oyama S."/>
            <person name="Saito N."/>
            <person name="Sampei G."/>
            <person name="Satoh Y."/>
            <person name="Sivasundaram S."/>
            <person name="Tagami H."/>
            <person name="Takahashi H."/>
            <person name="Takeda J."/>
            <person name="Takemoto K."/>
            <person name="Uehara K."/>
            <person name="Wada C."/>
            <person name="Yamagata S."/>
            <person name="Horiuchi T."/>
        </authorList>
    </citation>
    <scope>NUCLEOTIDE SEQUENCE [LARGE SCALE GENOMIC DNA]</scope>
    <source>
        <strain>K12 / W3110 / ATCC 27325 / DSM 5911</strain>
    </source>
</reference>
<reference key="2">
    <citation type="journal article" date="1997" name="Science">
        <title>The complete genome sequence of Escherichia coli K-12.</title>
        <authorList>
            <person name="Blattner F.R."/>
            <person name="Plunkett G. III"/>
            <person name="Bloch C.A."/>
            <person name="Perna N.T."/>
            <person name="Burland V."/>
            <person name="Riley M."/>
            <person name="Collado-Vides J."/>
            <person name="Glasner J.D."/>
            <person name="Rode C.K."/>
            <person name="Mayhew G.F."/>
            <person name="Gregor J."/>
            <person name="Davis N.W."/>
            <person name="Kirkpatrick H.A."/>
            <person name="Goeden M.A."/>
            <person name="Rose D.J."/>
            <person name="Mau B."/>
            <person name="Shao Y."/>
        </authorList>
    </citation>
    <scope>NUCLEOTIDE SEQUENCE [LARGE SCALE GENOMIC DNA]</scope>
    <source>
        <strain>K12 / MG1655 / ATCC 47076</strain>
    </source>
</reference>
<reference key="3">
    <citation type="journal article" date="2006" name="Mol. Syst. Biol.">
        <title>Highly accurate genome sequences of Escherichia coli K-12 strains MG1655 and W3110.</title>
        <authorList>
            <person name="Hayashi K."/>
            <person name="Morooka N."/>
            <person name="Yamamoto Y."/>
            <person name="Fujita K."/>
            <person name="Isono K."/>
            <person name="Choi S."/>
            <person name="Ohtsubo E."/>
            <person name="Baba T."/>
            <person name="Wanner B.L."/>
            <person name="Mori H."/>
            <person name="Horiuchi T."/>
        </authorList>
    </citation>
    <scope>NUCLEOTIDE SEQUENCE [LARGE SCALE GENOMIC DNA]</scope>
    <source>
        <strain>K12 / W3110 / ATCC 27325 / DSM 5911</strain>
    </source>
</reference>
<reference key="4">
    <citation type="journal article" date="2008" name="J. Bacteriol.">
        <title>The transcriptional factors MurR and catabolite activator protein regulate N-acetylmuramic acid catabolism in Escherichia coli.</title>
        <authorList>
            <person name="Jaeger T."/>
            <person name="Mayer C."/>
        </authorList>
    </citation>
    <scope>FUNCTION AS A TRANSCRIPTIONAL REGULATOR</scope>
    <scope>PATHWAY</scope>
    <scope>INDUCER</scope>
    <scope>INDUCTION</scope>
    <scope>SUBUNIT</scope>
    <scope>DISRUPTION PHENOTYPE</scope>
    <source>
        <strain>K12 / MG1655 / ATCC 47076</strain>
    </source>
</reference>
<feature type="chain" id="PRO_0000068625" description="HTH-type transcriptional regulator MurR">
    <location>
        <begin position="1"/>
        <end position="285"/>
    </location>
</feature>
<feature type="domain" description="HTH rpiR-type">
    <location>
        <begin position="1"/>
        <end position="77"/>
    </location>
</feature>
<feature type="domain" description="SIS">
    <location>
        <begin position="128"/>
        <end position="268"/>
    </location>
</feature>
<feature type="DNA-binding region" description="H-T-H motif" evidence="1">
    <location>
        <begin position="37"/>
        <end position="56"/>
    </location>
</feature>
<feature type="helix" evidence="4">
    <location>
        <begin position="98"/>
        <end position="118"/>
    </location>
</feature>
<feature type="helix" evidence="4">
    <location>
        <begin position="122"/>
        <end position="133"/>
    </location>
</feature>
<feature type="strand" evidence="4">
    <location>
        <begin position="136"/>
        <end position="141"/>
    </location>
</feature>
<feature type="helix" evidence="4">
    <location>
        <begin position="144"/>
        <end position="159"/>
    </location>
</feature>
<feature type="helix" evidence="4">
    <location>
        <begin position="170"/>
        <end position="178"/>
    </location>
</feature>
<feature type="strand" evidence="4">
    <location>
        <begin position="185"/>
        <end position="189"/>
    </location>
</feature>
<feature type="strand" evidence="4">
    <location>
        <begin position="191"/>
        <end position="193"/>
    </location>
</feature>
<feature type="helix" evidence="4">
    <location>
        <begin position="196"/>
        <end position="207"/>
    </location>
</feature>
<feature type="strand" evidence="4">
    <location>
        <begin position="211"/>
        <end position="216"/>
    </location>
</feature>
<feature type="helix" evidence="4">
    <location>
        <begin position="222"/>
        <end position="226"/>
    </location>
</feature>
<feature type="strand" evidence="4">
    <location>
        <begin position="228"/>
        <end position="232"/>
    </location>
</feature>
<feature type="turn" evidence="4">
    <location>
        <begin position="240"/>
        <end position="242"/>
    </location>
</feature>
<feature type="helix" evidence="4">
    <location>
        <begin position="243"/>
        <end position="265"/>
    </location>
</feature>
<feature type="helix" evidence="4">
    <location>
        <begin position="267"/>
        <end position="282"/>
    </location>
</feature>
<keyword id="KW-0002">3D-structure</keyword>
<keyword id="KW-0119">Carbohydrate metabolism</keyword>
<keyword id="KW-0238">DNA-binding</keyword>
<keyword id="KW-1185">Reference proteome</keyword>
<keyword id="KW-0678">Repressor</keyword>
<keyword id="KW-0804">Transcription</keyword>
<keyword id="KW-0805">Transcription regulation</keyword>
<comment type="function">
    <text evidence="2">Represses the expression of the murPQ operon involved in the uptake and degradation of N-acetylmuramic acid (MurNAc). Binds to two adjacent inverted repeats within the operator region. MurNAc 6-phosphate, the substrate of MurQ, is the specific inducer that weakens binding of MurR to the operator. Also represses its own transcription.</text>
</comment>
<comment type="pathway">
    <text evidence="2">Amino-sugar metabolism; N-acetylmuramate degradation [regulation].</text>
</comment>
<comment type="subunit">
    <text evidence="3">Homotetramer.</text>
</comment>
<comment type="induction">
    <text evidence="2">Repressed by itself and by the cAMP receptor protein crp.</text>
</comment>
<comment type="disruption phenotype">
    <text evidence="2">Cells lacking this gene show an abolition of the extensive lag phase observed when grown on MurNAc and a 20-fold enhancement of murQ transcription.</text>
</comment>
<comment type="miscellaneous">
    <text>Neither GlcNAc-6-P, GlcNAc, anhydroMurNAc, MurNAc, nor muramyl dipeptide have an effect on MurR binding to the operator site.</text>
</comment>
<evidence type="ECO:0000255" key="1"/>
<evidence type="ECO:0000269" key="2">
    <source>
    </source>
</evidence>
<evidence type="ECO:0000305" key="3">
    <source>
    </source>
</evidence>
<evidence type="ECO:0007829" key="4">
    <source>
        <dbReference type="PDB" id="7EN7"/>
    </source>
</evidence>
<protein>
    <recommendedName>
        <fullName>HTH-type transcriptional regulator MurR</fullName>
    </recommendedName>
    <alternativeName>
        <fullName>MurPQ operon repressor</fullName>
    </alternativeName>
</protein>